<accession>Q7N1U1</accession>
<reference key="1">
    <citation type="journal article" date="2003" name="Nat. Biotechnol.">
        <title>The genome sequence of the entomopathogenic bacterium Photorhabdus luminescens.</title>
        <authorList>
            <person name="Duchaud E."/>
            <person name="Rusniok C."/>
            <person name="Frangeul L."/>
            <person name="Buchrieser C."/>
            <person name="Givaudan A."/>
            <person name="Taourit S."/>
            <person name="Bocs S."/>
            <person name="Boursaux-Eude C."/>
            <person name="Chandler M."/>
            <person name="Charles J.-F."/>
            <person name="Dassa E."/>
            <person name="Derose R."/>
            <person name="Derzelle S."/>
            <person name="Freyssinet G."/>
            <person name="Gaudriault S."/>
            <person name="Medigue C."/>
            <person name="Lanois A."/>
            <person name="Powell K."/>
            <person name="Siguier P."/>
            <person name="Vincent R."/>
            <person name="Wingate V."/>
            <person name="Zouine M."/>
            <person name="Glaser P."/>
            <person name="Boemare N."/>
            <person name="Danchin A."/>
            <person name="Kunst F."/>
        </authorList>
    </citation>
    <scope>NUCLEOTIDE SEQUENCE [LARGE SCALE GENOMIC DNA]</scope>
    <source>
        <strain>DSM 15139 / CIP 105565 / TT01</strain>
    </source>
</reference>
<gene>
    <name evidence="1" type="primary">smpB</name>
    <name type="ordered locus">plu3378</name>
</gene>
<name>SSRP_PHOLL</name>
<evidence type="ECO:0000255" key="1">
    <source>
        <dbReference type="HAMAP-Rule" id="MF_00023"/>
    </source>
</evidence>
<dbReference type="EMBL" id="BX571870">
    <property type="protein sequence ID" value="CAE15752.1"/>
    <property type="molecule type" value="Genomic_DNA"/>
</dbReference>
<dbReference type="RefSeq" id="WP_011147562.1">
    <property type="nucleotide sequence ID" value="NC_005126.1"/>
</dbReference>
<dbReference type="SMR" id="Q7N1U1"/>
<dbReference type="STRING" id="243265.plu3378"/>
<dbReference type="GeneID" id="48849630"/>
<dbReference type="KEGG" id="plu:plu3378"/>
<dbReference type="eggNOG" id="COG0691">
    <property type="taxonomic scope" value="Bacteria"/>
</dbReference>
<dbReference type="HOGENOM" id="CLU_108953_3_0_6"/>
<dbReference type="OrthoDB" id="9805462at2"/>
<dbReference type="Proteomes" id="UP000002514">
    <property type="component" value="Chromosome"/>
</dbReference>
<dbReference type="GO" id="GO:0005829">
    <property type="term" value="C:cytosol"/>
    <property type="evidence" value="ECO:0007669"/>
    <property type="project" value="TreeGrafter"/>
</dbReference>
<dbReference type="GO" id="GO:0003723">
    <property type="term" value="F:RNA binding"/>
    <property type="evidence" value="ECO:0007669"/>
    <property type="project" value="UniProtKB-UniRule"/>
</dbReference>
<dbReference type="GO" id="GO:0070929">
    <property type="term" value="P:trans-translation"/>
    <property type="evidence" value="ECO:0007669"/>
    <property type="project" value="UniProtKB-UniRule"/>
</dbReference>
<dbReference type="CDD" id="cd09294">
    <property type="entry name" value="SmpB"/>
    <property type="match status" value="1"/>
</dbReference>
<dbReference type="Gene3D" id="2.40.280.10">
    <property type="match status" value="1"/>
</dbReference>
<dbReference type="HAMAP" id="MF_00023">
    <property type="entry name" value="SmpB"/>
    <property type="match status" value="1"/>
</dbReference>
<dbReference type="InterPro" id="IPR023620">
    <property type="entry name" value="SmpB"/>
</dbReference>
<dbReference type="InterPro" id="IPR000037">
    <property type="entry name" value="SsrA-bd_prot"/>
</dbReference>
<dbReference type="InterPro" id="IPR020081">
    <property type="entry name" value="SsrA-bd_prot_CS"/>
</dbReference>
<dbReference type="NCBIfam" id="NF003843">
    <property type="entry name" value="PRK05422.1"/>
    <property type="match status" value="1"/>
</dbReference>
<dbReference type="NCBIfam" id="TIGR00086">
    <property type="entry name" value="smpB"/>
    <property type="match status" value="1"/>
</dbReference>
<dbReference type="PANTHER" id="PTHR30308:SF2">
    <property type="entry name" value="SSRA-BINDING PROTEIN"/>
    <property type="match status" value="1"/>
</dbReference>
<dbReference type="PANTHER" id="PTHR30308">
    <property type="entry name" value="TMRNA-BINDING COMPONENT OF TRANS-TRANSLATION TAGGING COMPLEX"/>
    <property type="match status" value="1"/>
</dbReference>
<dbReference type="Pfam" id="PF01668">
    <property type="entry name" value="SmpB"/>
    <property type="match status" value="1"/>
</dbReference>
<dbReference type="SUPFAM" id="SSF74982">
    <property type="entry name" value="Small protein B (SmpB)"/>
    <property type="match status" value="1"/>
</dbReference>
<dbReference type="PROSITE" id="PS01317">
    <property type="entry name" value="SSRP"/>
    <property type="match status" value="1"/>
</dbReference>
<comment type="function">
    <text evidence="1">Required for rescue of stalled ribosomes mediated by trans-translation. Binds to transfer-messenger RNA (tmRNA), required for stable association of tmRNA with ribosomes. tmRNA and SmpB together mimic tRNA shape, replacing the anticodon stem-loop with SmpB. tmRNA is encoded by the ssrA gene; the 2 termini fold to resemble tRNA(Ala) and it encodes a 'tag peptide', a short internal open reading frame. During trans-translation Ala-aminoacylated tmRNA acts like a tRNA, entering the A-site of stalled ribosomes, displacing the stalled mRNA. The ribosome then switches to translate the ORF on the tmRNA; the nascent peptide is terminated with the 'tag peptide' encoded by the tmRNA and targeted for degradation. The ribosome is freed to recommence translation, which seems to be the essential function of trans-translation.</text>
</comment>
<comment type="subcellular location">
    <subcellularLocation>
        <location evidence="1">Cytoplasm</location>
    </subcellularLocation>
    <text evidence="1">The tmRNA-SmpB complex associates with stalled 70S ribosomes.</text>
</comment>
<comment type="similarity">
    <text evidence="1">Belongs to the SmpB family.</text>
</comment>
<proteinExistence type="inferred from homology"/>
<sequence>MTKKKAHKPGSATIAMNRRARHEYFIEEEFEAGLSLQGWEVKSLRAGKANISDSYVLLKDGDAYLFGATITPLNVASSHVVCDPMRSRKLLLNQRELDSLYGRVNREGYTVVALSLYWKNAWCKVRIGVAKGKKAHDKRSDIKEREWKLDKARIMKNAGR</sequence>
<protein>
    <recommendedName>
        <fullName evidence="1">SsrA-binding protein</fullName>
    </recommendedName>
    <alternativeName>
        <fullName evidence="1">Small protein B</fullName>
    </alternativeName>
</protein>
<keyword id="KW-0963">Cytoplasm</keyword>
<keyword id="KW-1185">Reference proteome</keyword>
<keyword id="KW-0694">RNA-binding</keyword>
<organism>
    <name type="scientific">Photorhabdus laumondii subsp. laumondii (strain DSM 15139 / CIP 105565 / TT01)</name>
    <name type="common">Photorhabdus luminescens subsp. laumondii</name>
    <dbReference type="NCBI Taxonomy" id="243265"/>
    <lineage>
        <taxon>Bacteria</taxon>
        <taxon>Pseudomonadati</taxon>
        <taxon>Pseudomonadota</taxon>
        <taxon>Gammaproteobacteria</taxon>
        <taxon>Enterobacterales</taxon>
        <taxon>Morganellaceae</taxon>
        <taxon>Photorhabdus</taxon>
    </lineage>
</organism>
<feature type="chain" id="PRO_0000103001" description="SsrA-binding protein">
    <location>
        <begin position="1"/>
        <end position="160"/>
    </location>
</feature>